<accession>P14466</accession>
<organism>
    <name type="scientific">Bison bonasus</name>
    <name type="common">European bison</name>
    <dbReference type="NCBI Taxonomy" id="9902"/>
    <lineage>
        <taxon>Eukaryota</taxon>
        <taxon>Metazoa</taxon>
        <taxon>Chordata</taxon>
        <taxon>Craniata</taxon>
        <taxon>Vertebrata</taxon>
        <taxon>Euteleostomi</taxon>
        <taxon>Mammalia</taxon>
        <taxon>Eutheria</taxon>
        <taxon>Laurasiatheria</taxon>
        <taxon>Artiodactyla</taxon>
        <taxon>Ruminantia</taxon>
        <taxon>Pecora</taxon>
        <taxon>Bovidae</taxon>
        <taxon>Bovinae</taxon>
        <taxon>Bison</taxon>
    </lineage>
</organism>
<proteinExistence type="evidence at protein level"/>
<comment type="function">
    <text evidence="1">Cleaved by the protease thrombin to yield monomers which, together with fibrinogen alpha (FGA) and fibrinogen gamma (FGG), polymerize to form an insoluble fibrin matrix. Fibrin has a major function in hemostasis as one of the primary components of blood clots. In addition, functions during the early stages of wound repair to stabilize the lesion and guide cell migration during re-epithelialization. Was originally thought to be essential for platelet aggregation, based on in vitro studies using anticoagulated blood. However subsequent studies have shown that it is not absolutely required for thrombus formation in vivo. Enhances expression of SELP in activated platelets. Maternal fibrinogen is essential for successful pregnancy. Fibrin deposition is also associated with infection, where it protects against IFNG-mediated hemorrhage. May also facilitate the antibacterial immune response via both innate and T-cell mediated pathways.</text>
</comment>
<comment type="subunit">
    <text evidence="2">Heterohexamer; disulfide linked. Contains 2 sets of 3 non-identical chains (alpha, beta and gamma). The 2 heterotrimers are in head to head conformation with the N-termini in a small central domain (By similarity).</text>
</comment>
<comment type="subcellular location">
    <subcellularLocation>
        <location>Secreted</location>
    </subcellularLocation>
</comment>
<comment type="domain">
    <text evidence="2">A long coiled coil structure formed by 3 polypeptide chains connects the central nodule to the C-terminal domains (distal nodules). The long C-terminal ends of the alpha chains fold back, contributing a fourth strand to the coiled coil structure.</text>
</comment>
<comment type="PTM">
    <text>Conversion of fibrinogen to fibrin is triggered by thrombin, which cleaves fibrinopeptides A and B from alpha and beta chains, and thus exposes the N-terminal polymerization sites responsible for the formation of the soft clot.</text>
</comment>
<protein>
    <recommendedName>
        <fullName>Fibrinogen beta chain</fullName>
    </recommendedName>
    <component>
        <recommendedName>
            <fullName>Fibrinopeptide B</fullName>
        </recommendedName>
    </component>
</protein>
<evidence type="ECO:0000250" key="1">
    <source>
        <dbReference type="UniProtKB" id="E9PV24"/>
    </source>
</evidence>
<evidence type="ECO:0000250" key="2">
    <source>
        <dbReference type="UniProtKB" id="P02675"/>
    </source>
</evidence>
<evidence type="ECO:0000256" key="3">
    <source>
        <dbReference type="SAM" id="MobiDB-lite"/>
    </source>
</evidence>
<evidence type="ECO:0000269" key="4">
    <source ref="1"/>
</evidence>
<name>FIBB_BISBO</name>
<reference key="1">
    <citation type="journal article" date="1965" name="Acta Chem. Scand.">
        <title>Studies on fibrinopeptides from mammals.</title>
        <authorList>
            <person name="Blombaeck B."/>
            <person name="Blombaeck M."/>
            <person name="Grondahl N.J."/>
        </authorList>
    </citation>
    <scope>PROTEIN SEQUENCE</scope>
    <scope>SULFATION AT TYR-6</scope>
</reference>
<dbReference type="GO" id="GO:0005576">
    <property type="term" value="C:extracellular region"/>
    <property type="evidence" value="ECO:0007669"/>
    <property type="project" value="UniProtKB-SubCell"/>
</dbReference>
<dbReference type="GO" id="GO:0002250">
    <property type="term" value="P:adaptive immune response"/>
    <property type="evidence" value="ECO:0007669"/>
    <property type="project" value="UniProtKB-KW"/>
</dbReference>
<dbReference type="GO" id="GO:0007596">
    <property type="term" value="P:blood coagulation"/>
    <property type="evidence" value="ECO:0007669"/>
    <property type="project" value="UniProtKB-KW"/>
</dbReference>
<dbReference type="GO" id="GO:0045087">
    <property type="term" value="P:innate immune response"/>
    <property type="evidence" value="ECO:0007669"/>
    <property type="project" value="UniProtKB-KW"/>
</dbReference>
<sequence>EFPTDYDEGEDDRPKVGLGAR</sequence>
<gene>
    <name type="primary">FGB</name>
</gene>
<feature type="peptide" id="PRO_0000009054" description="Fibrinopeptide B">
    <location>
        <begin position="1"/>
        <end position="21"/>
    </location>
</feature>
<feature type="region of interest" description="Disordered" evidence="3">
    <location>
        <begin position="1"/>
        <end position="21"/>
    </location>
</feature>
<feature type="compositionally biased region" description="Acidic residues" evidence="3">
    <location>
        <begin position="1"/>
        <end position="11"/>
    </location>
</feature>
<feature type="modified residue" description="Sulfotyrosine" evidence="4">
    <location>
        <position position="6"/>
    </location>
</feature>
<feature type="non-terminal residue">
    <location>
        <position position="21"/>
    </location>
</feature>
<keyword id="KW-1064">Adaptive immunity</keyword>
<keyword id="KW-0094">Blood coagulation</keyword>
<keyword id="KW-0175">Coiled coil</keyword>
<keyword id="KW-0903">Direct protein sequencing</keyword>
<keyword id="KW-1015">Disulfide bond</keyword>
<keyword id="KW-0356">Hemostasis</keyword>
<keyword id="KW-0391">Immunity</keyword>
<keyword id="KW-0399">Innate immunity</keyword>
<keyword id="KW-0964">Secreted</keyword>
<keyword id="KW-0765">Sulfation</keyword>